<organism>
    <name type="scientific">Aromatoleum aromaticum (strain DSM 19018 / LMG 30748 / EbN1)</name>
    <name type="common">Azoarcus sp. (strain EbN1)</name>
    <dbReference type="NCBI Taxonomy" id="76114"/>
    <lineage>
        <taxon>Bacteria</taxon>
        <taxon>Pseudomonadati</taxon>
        <taxon>Pseudomonadota</taxon>
        <taxon>Betaproteobacteria</taxon>
        <taxon>Rhodocyclales</taxon>
        <taxon>Rhodocyclaceae</taxon>
        <taxon>Aromatoleum</taxon>
    </lineage>
</organism>
<evidence type="ECO:0000255" key="1">
    <source>
        <dbReference type="HAMAP-Rule" id="MF_01318"/>
    </source>
</evidence>
<evidence type="ECO:0000305" key="2"/>
<sequence>MTKLSKRVQALRTKVDRNRTYPVTEALALVKECATAKFDESIDIAVNLGIDARKSDQLVRGSVVLPAGTGKSVRVAVFAQGDKAEAARAAGADVVGFEDLAEQVKAGNIDFDLCIATPDAMRVVGQLGQILGPRGLMPNPKVGTVTMDVTTAVKNAKAGQVQYRTDKGGIIHATIGRASFSTEALQQNLGALVDALVKAKPAASKGIYLRRVALSSTMGSGVRVEPSSINAA</sequence>
<keyword id="KW-1185">Reference proteome</keyword>
<keyword id="KW-0678">Repressor</keyword>
<keyword id="KW-0687">Ribonucleoprotein</keyword>
<keyword id="KW-0689">Ribosomal protein</keyword>
<keyword id="KW-0694">RNA-binding</keyword>
<keyword id="KW-0699">rRNA-binding</keyword>
<keyword id="KW-0810">Translation regulation</keyword>
<keyword id="KW-0820">tRNA-binding</keyword>
<feature type="chain" id="PRO_0000230589" description="Large ribosomal subunit protein uL1">
    <location>
        <begin position="1"/>
        <end position="232"/>
    </location>
</feature>
<gene>
    <name evidence="1" type="primary">rplA</name>
    <name type="ordered locus">AZOSEA21470</name>
    <name type="ORF">ebA3814</name>
</gene>
<comment type="function">
    <text evidence="1">Binds directly to 23S rRNA. The L1 stalk is quite mobile in the ribosome, and is involved in E site tRNA release.</text>
</comment>
<comment type="function">
    <text evidence="1">Protein L1 is also a translational repressor protein, it controls the translation of the L11 operon by binding to its mRNA.</text>
</comment>
<comment type="subunit">
    <text evidence="1">Part of the 50S ribosomal subunit.</text>
</comment>
<comment type="similarity">
    <text evidence="1">Belongs to the universal ribosomal protein uL1 family.</text>
</comment>
<name>RL1_AROAE</name>
<reference key="1">
    <citation type="journal article" date="2005" name="Arch. Microbiol.">
        <title>The genome sequence of an anaerobic aromatic-degrading denitrifying bacterium, strain EbN1.</title>
        <authorList>
            <person name="Rabus R."/>
            <person name="Kube M."/>
            <person name="Heider J."/>
            <person name="Beck A."/>
            <person name="Heitmann K."/>
            <person name="Widdel F."/>
            <person name="Reinhardt R."/>
        </authorList>
    </citation>
    <scope>NUCLEOTIDE SEQUENCE [LARGE SCALE GENOMIC DNA]</scope>
    <source>
        <strain>DSM 19018 / LMG 30748 / EbN1</strain>
    </source>
</reference>
<dbReference type="EMBL" id="CR555306">
    <property type="protein sequence ID" value="CAI08272.1"/>
    <property type="molecule type" value="Genomic_DNA"/>
</dbReference>
<dbReference type="RefSeq" id="WP_011237963.1">
    <property type="nucleotide sequence ID" value="NC_006513.1"/>
</dbReference>
<dbReference type="SMR" id="Q5P342"/>
<dbReference type="STRING" id="76114.ebA3814"/>
<dbReference type="KEGG" id="eba:ebA3814"/>
<dbReference type="eggNOG" id="COG0081">
    <property type="taxonomic scope" value="Bacteria"/>
</dbReference>
<dbReference type="HOGENOM" id="CLU_062853_0_0_4"/>
<dbReference type="OrthoDB" id="9803740at2"/>
<dbReference type="Proteomes" id="UP000006552">
    <property type="component" value="Chromosome"/>
</dbReference>
<dbReference type="GO" id="GO:0022625">
    <property type="term" value="C:cytosolic large ribosomal subunit"/>
    <property type="evidence" value="ECO:0007669"/>
    <property type="project" value="TreeGrafter"/>
</dbReference>
<dbReference type="GO" id="GO:0019843">
    <property type="term" value="F:rRNA binding"/>
    <property type="evidence" value="ECO:0007669"/>
    <property type="project" value="UniProtKB-UniRule"/>
</dbReference>
<dbReference type="GO" id="GO:0003735">
    <property type="term" value="F:structural constituent of ribosome"/>
    <property type="evidence" value="ECO:0007669"/>
    <property type="project" value="InterPro"/>
</dbReference>
<dbReference type="GO" id="GO:0000049">
    <property type="term" value="F:tRNA binding"/>
    <property type="evidence" value="ECO:0007669"/>
    <property type="project" value="UniProtKB-KW"/>
</dbReference>
<dbReference type="GO" id="GO:0006417">
    <property type="term" value="P:regulation of translation"/>
    <property type="evidence" value="ECO:0007669"/>
    <property type="project" value="UniProtKB-KW"/>
</dbReference>
<dbReference type="GO" id="GO:0006412">
    <property type="term" value="P:translation"/>
    <property type="evidence" value="ECO:0007669"/>
    <property type="project" value="UniProtKB-UniRule"/>
</dbReference>
<dbReference type="CDD" id="cd00403">
    <property type="entry name" value="Ribosomal_L1"/>
    <property type="match status" value="1"/>
</dbReference>
<dbReference type="FunFam" id="3.40.50.790:FF:000001">
    <property type="entry name" value="50S ribosomal protein L1"/>
    <property type="match status" value="1"/>
</dbReference>
<dbReference type="Gene3D" id="3.30.190.20">
    <property type="match status" value="1"/>
</dbReference>
<dbReference type="Gene3D" id="3.40.50.790">
    <property type="match status" value="1"/>
</dbReference>
<dbReference type="HAMAP" id="MF_01318_B">
    <property type="entry name" value="Ribosomal_uL1_B"/>
    <property type="match status" value="1"/>
</dbReference>
<dbReference type="InterPro" id="IPR005878">
    <property type="entry name" value="Ribosom_uL1_bac-type"/>
</dbReference>
<dbReference type="InterPro" id="IPR002143">
    <property type="entry name" value="Ribosomal_uL1"/>
</dbReference>
<dbReference type="InterPro" id="IPR023674">
    <property type="entry name" value="Ribosomal_uL1-like"/>
</dbReference>
<dbReference type="InterPro" id="IPR028364">
    <property type="entry name" value="Ribosomal_uL1/biogenesis"/>
</dbReference>
<dbReference type="InterPro" id="IPR016095">
    <property type="entry name" value="Ribosomal_uL1_3-a/b-sand"/>
</dbReference>
<dbReference type="InterPro" id="IPR023673">
    <property type="entry name" value="Ribosomal_uL1_CS"/>
</dbReference>
<dbReference type="NCBIfam" id="TIGR01169">
    <property type="entry name" value="rplA_bact"/>
    <property type="match status" value="1"/>
</dbReference>
<dbReference type="PANTHER" id="PTHR36427">
    <property type="entry name" value="54S RIBOSOMAL PROTEIN L1, MITOCHONDRIAL"/>
    <property type="match status" value="1"/>
</dbReference>
<dbReference type="PANTHER" id="PTHR36427:SF3">
    <property type="entry name" value="LARGE RIBOSOMAL SUBUNIT PROTEIN UL1M"/>
    <property type="match status" value="1"/>
</dbReference>
<dbReference type="Pfam" id="PF00687">
    <property type="entry name" value="Ribosomal_L1"/>
    <property type="match status" value="1"/>
</dbReference>
<dbReference type="PIRSF" id="PIRSF002155">
    <property type="entry name" value="Ribosomal_L1"/>
    <property type="match status" value="1"/>
</dbReference>
<dbReference type="SUPFAM" id="SSF56808">
    <property type="entry name" value="Ribosomal protein L1"/>
    <property type="match status" value="1"/>
</dbReference>
<dbReference type="PROSITE" id="PS01199">
    <property type="entry name" value="RIBOSOMAL_L1"/>
    <property type="match status" value="1"/>
</dbReference>
<accession>Q5P342</accession>
<proteinExistence type="inferred from homology"/>
<protein>
    <recommendedName>
        <fullName evidence="1">Large ribosomal subunit protein uL1</fullName>
    </recommendedName>
    <alternativeName>
        <fullName evidence="2">50S ribosomal protein L1</fullName>
    </alternativeName>
</protein>